<feature type="chain" id="PRO_1000114638" description="Nucleoid-associated protein Rpal_0620">
    <location>
        <begin position="1"/>
        <end position="106"/>
    </location>
</feature>
<comment type="function">
    <text evidence="1">Binds to DNA and alters its conformation. May be involved in regulation of gene expression, nucleoid organization and DNA protection.</text>
</comment>
<comment type="subunit">
    <text evidence="1">Homodimer.</text>
</comment>
<comment type="subcellular location">
    <subcellularLocation>
        <location evidence="1">Cytoplasm</location>
        <location evidence="1">Nucleoid</location>
    </subcellularLocation>
</comment>
<comment type="similarity">
    <text evidence="1">Belongs to the YbaB/EbfC family.</text>
</comment>
<protein>
    <recommendedName>
        <fullName evidence="1">Nucleoid-associated protein Rpal_0620</fullName>
    </recommendedName>
</protein>
<name>Y620_RHOPT</name>
<proteinExistence type="inferred from homology"/>
<dbReference type="EMBL" id="CP001096">
    <property type="protein sequence ID" value="ACE99179.1"/>
    <property type="molecule type" value="Genomic_DNA"/>
</dbReference>
<dbReference type="RefSeq" id="WP_012494280.1">
    <property type="nucleotide sequence ID" value="NC_011004.1"/>
</dbReference>
<dbReference type="SMR" id="B3QCG6"/>
<dbReference type="KEGG" id="rpt:Rpal_0620"/>
<dbReference type="HOGENOM" id="CLU_140930_0_1_5"/>
<dbReference type="OrthoDB" id="9803080at2"/>
<dbReference type="Proteomes" id="UP000001725">
    <property type="component" value="Chromosome"/>
</dbReference>
<dbReference type="GO" id="GO:0043590">
    <property type="term" value="C:bacterial nucleoid"/>
    <property type="evidence" value="ECO:0007669"/>
    <property type="project" value="UniProtKB-UniRule"/>
</dbReference>
<dbReference type="GO" id="GO:0005829">
    <property type="term" value="C:cytosol"/>
    <property type="evidence" value="ECO:0007669"/>
    <property type="project" value="TreeGrafter"/>
</dbReference>
<dbReference type="GO" id="GO:0003677">
    <property type="term" value="F:DNA binding"/>
    <property type="evidence" value="ECO:0007669"/>
    <property type="project" value="UniProtKB-UniRule"/>
</dbReference>
<dbReference type="Gene3D" id="3.30.1310.10">
    <property type="entry name" value="Nucleoid-associated protein YbaB-like domain"/>
    <property type="match status" value="1"/>
</dbReference>
<dbReference type="HAMAP" id="MF_00274">
    <property type="entry name" value="DNA_YbaB_EbfC"/>
    <property type="match status" value="1"/>
</dbReference>
<dbReference type="InterPro" id="IPR036894">
    <property type="entry name" value="YbaB-like_sf"/>
</dbReference>
<dbReference type="InterPro" id="IPR004401">
    <property type="entry name" value="YbaB/EbfC"/>
</dbReference>
<dbReference type="NCBIfam" id="TIGR00103">
    <property type="entry name" value="DNA_YbaB_EbfC"/>
    <property type="match status" value="1"/>
</dbReference>
<dbReference type="PANTHER" id="PTHR33449">
    <property type="entry name" value="NUCLEOID-ASSOCIATED PROTEIN YBAB"/>
    <property type="match status" value="1"/>
</dbReference>
<dbReference type="PANTHER" id="PTHR33449:SF1">
    <property type="entry name" value="NUCLEOID-ASSOCIATED PROTEIN YBAB"/>
    <property type="match status" value="1"/>
</dbReference>
<dbReference type="Pfam" id="PF02575">
    <property type="entry name" value="YbaB_DNA_bd"/>
    <property type="match status" value="1"/>
</dbReference>
<dbReference type="PIRSF" id="PIRSF004555">
    <property type="entry name" value="UCP004555"/>
    <property type="match status" value="1"/>
</dbReference>
<dbReference type="SUPFAM" id="SSF82607">
    <property type="entry name" value="YbaB-like"/>
    <property type="match status" value="1"/>
</dbReference>
<reference key="1">
    <citation type="submission" date="2008-05" db="EMBL/GenBank/DDBJ databases">
        <title>Complete sequence of Rhodopseudomonas palustris TIE-1.</title>
        <authorList>
            <consortium name="US DOE Joint Genome Institute"/>
            <person name="Lucas S."/>
            <person name="Copeland A."/>
            <person name="Lapidus A."/>
            <person name="Glavina del Rio T."/>
            <person name="Dalin E."/>
            <person name="Tice H."/>
            <person name="Pitluck S."/>
            <person name="Chain P."/>
            <person name="Malfatti S."/>
            <person name="Shin M."/>
            <person name="Vergez L."/>
            <person name="Lang D."/>
            <person name="Schmutz J."/>
            <person name="Larimer F."/>
            <person name="Land M."/>
            <person name="Hauser L."/>
            <person name="Kyrpides N."/>
            <person name="Mikhailova N."/>
            <person name="Emerson D."/>
            <person name="Newman D.K."/>
            <person name="Roden E."/>
            <person name="Richardson P."/>
        </authorList>
    </citation>
    <scope>NUCLEOTIDE SEQUENCE [LARGE SCALE GENOMIC DNA]</scope>
    <source>
        <strain>TIE-1</strain>
    </source>
</reference>
<sequence>MADFLGMMKQAAQLQSKMKAMQAELDQIEVEGLSGGGLVKVRMSAKMEVRGISIDPSLIKADEREVLEDLLVAAHGDAHRKAEAAMQEKMQALTGGLGLPPGLGLG</sequence>
<evidence type="ECO:0000255" key="1">
    <source>
        <dbReference type="HAMAP-Rule" id="MF_00274"/>
    </source>
</evidence>
<gene>
    <name type="ordered locus">Rpal_0620</name>
</gene>
<accession>B3QCG6</accession>
<organism>
    <name type="scientific">Rhodopseudomonas palustris (strain TIE-1)</name>
    <dbReference type="NCBI Taxonomy" id="395960"/>
    <lineage>
        <taxon>Bacteria</taxon>
        <taxon>Pseudomonadati</taxon>
        <taxon>Pseudomonadota</taxon>
        <taxon>Alphaproteobacteria</taxon>
        <taxon>Hyphomicrobiales</taxon>
        <taxon>Nitrobacteraceae</taxon>
        <taxon>Rhodopseudomonas</taxon>
    </lineage>
</organism>
<keyword id="KW-0963">Cytoplasm</keyword>
<keyword id="KW-0238">DNA-binding</keyword>